<dbReference type="EC" id="2.8.1.13" evidence="1"/>
<dbReference type="EMBL" id="BA000004">
    <property type="protein sequence ID" value="BAB04980.1"/>
    <property type="molecule type" value="Genomic_DNA"/>
</dbReference>
<dbReference type="PIR" id="E83807">
    <property type="entry name" value="E83807"/>
</dbReference>
<dbReference type="RefSeq" id="WP_010897429.1">
    <property type="nucleotide sequence ID" value="NC_002570.2"/>
</dbReference>
<dbReference type="SMR" id="Q9KDF2"/>
<dbReference type="STRING" id="272558.gene:10727155"/>
<dbReference type="DNASU" id="894246"/>
<dbReference type="KEGG" id="bha:BH1261"/>
<dbReference type="eggNOG" id="COG0482">
    <property type="taxonomic scope" value="Bacteria"/>
</dbReference>
<dbReference type="HOGENOM" id="CLU_035188_1_0_9"/>
<dbReference type="OrthoDB" id="9800696at2"/>
<dbReference type="Proteomes" id="UP000001258">
    <property type="component" value="Chromosome"/>
</dbReference>
<dbReference type="GO" id="GO:0005737">
    <property type="term" value="C:cytoplasm"/>
    <property type="evidence" value="ECO:0007669"/>
    <property type="project" value="UniProtKB-SubCell"/>
</dbReference>
<dbReference type="GO" id="GO:0005524">
    <property type="term" value="F:ATP binding"/>
    <property type="evidence" value="ECO:0007669"/>
    <property type="project" value="UniProtKB-KW"/>
</dbReference>
<dbReference type="GO" id="GO:0000049">
    <property type="term" value="F:tRNA binding"/>
    <property type="evidence" value="ECO:0007669"/>
    <property type="project" value="UniProtKB-KW"/>
</dbReference>
<dbReference type="GO" id="GO:0103016">
    <property type="term" value="F:tRNA-uridine 2-sulfurtransferase activity"/>
    <property type="evidence" value="ECO:0007669"/>
    <property type="project" value="UniProtKB-EC"/>
</dbReference>
<dbReference type="GO" id="GO:0002143">
    <property type="term" value="P:tRNA wobble position uridine thiolation"/>
    <property type="evidence" value="ECO:0007669"/>
    <property type="project" value="TreeGrafter"/>
</dbReference>
<dbReference type="CDD" id="cd01998">
    <property type="entry name" value="MnmA_TRMU-like"/>
    <property type="match status" value="1"/>
</dbReference>
<dbReference type="FunFam" id="2.30.30.280:FF:000001">
    <property type="entry name" value="tRNA-specific 2-thiouridylase MnmA"/>
    <property type="match status" value="1"/>
</dbReference>
<dbReference type="FunFam" id="2.40.30.10:FF:000023">
    <property type="entry name" value="tRNA-specific 2-thiouridylase MnmA"/>
    <property type="match status" value="1"/>
</dbReference>
<dbReference type="FunFam" id="3.40.50.620:FF:000004">
    <property type="entry name" value="tRNA-specific 2-thiouridylase MnmA"/>
    <property type="match status" value="1"/>
</dbReference>
<dbReference type="Gene3D" id="2.30.30.280">
    <property type="entry name" value="Adenine nucleotide alpha hydrolases-like domains"/>
    <property type="match status" value="1"/>
</dbReference>
<dbReference type="Gene3D" id="3.40.50.620">
    <property type="entry name" value="HUPs"/>
    <property type="match status" value="1"/>
</dbReference>
<dbReference type="Gene3D" id="2.40.30.10">
    <property type="entry name" value="Translation factors"/>
    <property type="match status" value="1"/>
</dbReference>
<dbReference type="HAMAP" id="MF_00144">
    <property type="entry name" value="tRNA_thiouridyl_MnmA"/>
    <property type="match status" value="1"/>
</dbReference>
<dbReference type="InterPro" id="IPR004506">
    <property type="entry name" value="MnmA-like"/>
</dbReference>
<dbReference type="InterPro" id="IPR046885">
    <property type="entry name" value="MnmA-like_C"/>
</dbReference>
<dbReference type="InterPro" id="IPR046884">
    <property type="entry name" value="MnmA-like_central"/>
</dbReference>
<dbReference type="InterPro" id="IPR023382">
    <property type="entry name" value="MnmA-like_central_sf"/>
</dbReference>
<dbReference type="InterPro" id="IPR014729">
    <property type="entry name" value="Rossmann-like_a/b/a_fold"/>
</dbReference>
<dbReference type="NCBIfam" id="NF001138">
    <property type="entry name" value="PRK00143.1"/>
    <property type="match status" value="1"/>
</dbReference>
<dbReference type="NCBIfam" id="TIGR00420">
    <property type="entry name" value="trmU"/>
    <property type="match status" value="1"/>
</dbReference>
<dbReference type="PANTHER" id="PTHR11933:SF5">
    <property type="entry name" value="MITOCHONDRIAL TRNA-SPECIFIC 2-THIOURIDYLASE 1"/>
    <property type="match status" value="1"/>
</dbReference>
<dbReference type="PANTHER" id="PTHR11933">
    <property type="entry name" value="TRNA 5-METHYLAMINOMETHYL-2-THIOURIDYLATE -METHYLTRANSFERASE"/>
    <property type="match status" value="1"/>
</dbReference>
<dbReference type="Pfam" id="PF03054">
    <property type="entry name" value="tRNA_Me_trans"/>
    <property type="match status" value="1"/>
</dbReference>
<dbReference type="Pfam" id="PF20258">
    <property type="entry name" value="tRNA_Me_trans_C"/>
    <property type="match status" value="1"/>
</dbReference>
<dbReference type="Pfam" id="PF20259">
    <property type="entry name" value="tRNA_Me_trans_M"/>
    <property type="match status" value="1"/>
</dbReference>
<dbReference type="SUPFAM" id="SSF52402">
    <property type="entry name" value="Adenine nucleotide alpha hydrolases-like"/>
    <property type="match status" value="1"/>
</dbReference>
<organism>
    <name type="scientific">Halalkalibacterium halodurans (strain ATCC BAA-125 / DSM 18197 / FERM 7344 / JCM 9153 / C-125)</name>
    <name type="common">Bacillus halodurans</name>
    <dbReference type="NCBI Taxonomy" id="272558"/>
    <lineage>
        <taxon>Bacteria</taxon>
        <taxon>Bacillati</taxon>
        <taxon>Bacillota</taxon>
        <taxon>Bacilli</taxon>
        <taxon>Bacillales</taxon>
        <taxon>Bacillaceae</taxon>
        <taxon>Halalkalibacterium (ex Joshi et al. 2022)</taxon>
    </lineage>
</organism>
<comment type="function">
    <text evidence="1">Catalyzes the 2-thiolation of uridine at the wobble position (U34) of tRNA, leading to the formation of s(2)U34.</text>
</comment>
<comment type="catalytic activity">
    <reaction evidence="1">
        <text>S-sulfanyl-L-cysteinyl-[protein] + uridine(34) in tRNA + AH2 + ATP = 2-thiouridine(34) in tRNA + L-cysteinyl-[protein] + A + AMP + diphosphate + H(+)</text>
        <dbReference type="Rhea" id="RHEA:47032"/>
        <dbReference type="Rhea" id="RHEA-COMP:10131"/>
        <dbReference type="Rhea" id="RHEA-COMP:11726"/>
        <dbReference type="Rhea" id="RHEA-COMP:11727"/>
        <dbReference type="Rhea" id="RHEA-COMP:11728"/>
        <dbReference type="ChEBI" id="CHEBI:13193"/>
        <dbReference type="ChEBI" id="CHEBI:15378"/>
        <dbReference type="ChEBI" id="CHEBI:17499"/>
        <dbReference type="ChEBI" id="CHEBI:29950"/>
        <dbReference type="ChEBI" id="CHEBI:30616"/>
        <dbReference type="ChEBI" id="CHEBI:33019"/>
        <dbReference type="ChEBI" id="CHEBI:61963"/>
        <dbReference type="ChEBI" id="CHEBI:65315"/>
        <dbReference type="ChEBI" id="CHEBI:87170"/>
        <dbReference type="ChEBI" id="CHEBI:456215"/>
        <dbReference type="EC" id="2.8.1.13"/>
    </reaction>
</comment>
<comment type="subcellular location">
    <subcellularLocation>
        <location evidence="1">Cytoplasm</location>
    </subcellularLocation>
</comment>
<comment type="similarity">
    <text evidence="1">Belongs to the MnmA/TRMU family.</text>
</comment>
<sequence>MEAKRPEQTRVVVGMSGGVDSSVTALLLKEQGYDVIGIFMKNWDDTDENGVCTATEDYQDVVQVCNQLGIAYYAVNFEKEYWDKVFTYFLEEYKAGRTPNPDVMCNKEIKFKAFLNHALTLGADYVATGHYAQVKNVDGQYQLIRGKDPNKDQTYFLNALSQQQLSRVMFPLGHLEKKEVRAIAERAGLATAKKKDSTGICFIGKRDFKEFLSSYLPAQPGEMQTLDGEVKGTHDGLMYYTLGQRQGLGIGGSGEPWFVIGKNLEKNILYVGQGFHHPGLYSEGLRAIKVNWILRRESDEPFECTAKFRYRQPDQKVTVYPQSDGAVEVLFAEPQRAITPGQAVVFYDGDVCLGGGTIDHVLKKKEDRESA</sequence>
<keyword id="KW-0067">ATP-binding</keyword>
<keyword id="KW-0963">Cytoplasm</keyword>
<keyword id="KW-1015">Disulfide bond</keyword>
<keyword id="KW-0547">Nucleotide-binding</keyword>
<keyword id="KW-1185">Reference proteome</keyword>
<keyword id="KW-0694">RNA-binding</keyword>
<keyword id="KW-0808">Transferase</keyword>
<keyword id="KW-0819">tRNA processing</keyword>
<keyword id="KW-0820">tRNA-binding</keyword>
<name>MNMA_HALH5</name>
<protein>
    <recommendedName>
        <fullName evidence="1">tRNA-specific 2-thiouridylase MnmA</fullName>
        <ecNumber evidence="1">2.8.1.13</ecNumber>
    </recommendedName>
</protein>
<evidence type="ECO:0000255" key="1">
    <source>
        <dbReference type="HAMAP-Rule" id="MF_00144"/>
    </source>
</evidence>
<gene>
    <name evidence="1" type="primary">mnmA</name>
    <name type="synonym">trmU</name>
    <name type="ordered locus">BH1261</name>
</gene>
<proteinExistence type="inferred from homology"/>
<feature type="chain" id="PRO_0000121606" description="tRNA-specific 2-thiouridylase MnmA">
    <location>
        <begin position="1"/>
        <end position="371"/>
    </location>
</feature>
<feature type="region of interest" description="Interaction with target base in tRNA" evidence="1">
    <location>
        <begin position="100"/>
        <end position="102"/>
    </location>
</feature>
<feature type="region of interest" description="Interaction with tRNA" evidence="1">
    <location>
        <begin position="151"/>
        <end position="153"/>
    </location>
</feature>
<feature type="region of interest" description="Interaction with tRNA" evidence="1">
    <location>
        <begin position="309"/>
        <end position="310"/>
    </location>
</feature>
<feature type="active site" description="Nucleophile" evidence="1">
    <location>
        <position position="105"/>
    </location>
</feature>
<feature type="active site" description="Cysteine persulfide intermediate" evidence="1">
    <location>
        <position position="201"/>
    </location>
</feature>
<feature type="binding site" evidence="1">
    <location>
        <begin position="14"/>
        <end position="21"/>
    </location>
    <ligand>
        <name>ATP</name>
        <dbReference type="ChEBI" id="CHEBI:30616"/>
    </ligand>
</feature>
<feature type="binding site" evidence="1">
    <location>
        <position position="40"/>
    </location>
    <ligand>
        <name>ATP</name>
        <dbReference type="ChEBI" id="CHEBI:30616"/>
    </ligand>
</feature>
<feature type="binding site" evidence="1">
    <location>
        <position position="129"/>
    </location>
    <ligand>
        <name>ATP</name>
        <dbReference type="ChEBI" id="CHEBI:30616"/>
    </ligand>
</feature>
<feature type="site" description="Interaction with tRNA" evidence="1">
    <location>
        <position position="130"/>
    </location>
</feature>
<feature type="site" description="Interaction with tRNA" evidence="1">
    <location>
        <position position="342"/>
    </location>
</feature>
<feature type="disulfide bond" description="Alternate" evidence="1">
    <location>
        <begin position="105"/>
        <end position="201"/>
    </location>
</feature>
<reference key="1">
    <citation type="journal article" date="2000" name="Nucleic Acids Res.">
        <title>Complete genome sequence of the alkaliphilic bacterium Bacillus halodurans and genomic sequence comparison with Bacillus subtilis.</title>
        <authorList>
            <person name="Takami H."/>
            <person name="Nakasone K."/>
            <person name="Takaki Y."/>
            <person name="Maeno G."/>
            <person name="Sasaki R."/>
            <person name="Masui N."/>
            <person name="Fuji F."/>
            <person name="Hirama C."/>
            <person name="Nakamura Y."/>
            <person name="Ogasawara N."/>
            <person name="Kuhara S."/>
            <person name="Horikoshi K."/>
        </authorList>
    </citation>
    <scope>NUCLEOTIDE SEQUENCE [LARGE SCALE GENOMIC DNA]</scope>
    <source>
        <strain>ATCC BAA-125 / DSM 18197 / FERM 7344 / JCM 9153 / C-125</strain>
    </source>
</reference>
<accession>Q9KDF2</accession>